<dbReference type="EMBL" id="CU234118">
    <property type="protein sequence ID" value="CAL76882.1"/>
    <property type="molecule type" value="Genomic_DNA"/>
</dbReference>
<dbReference type="RefSeq" id="WP_006611852.1">
    <property type="nucleotide sequence ID" value="NC_009445.1"/>
</dbReference>
<dbReference type="SMR" id="A4YSK6"/>
<dbReference type="STRING" id="114615.BRADO3080"/>
<dbReference type="KEGG" id="bra:BRADO3080"/>
<dbReference type="eggNOG" id="COG0096">
    <property type="taxonomic scope" value="Bacteria"/>
</dbReference>
<dbReference type="HOGENOM" id="CLU_098428_0_0_5"/>
<dbReference type="OrthoDB" id="9802617at2"/>
<dbReference type="Proteomes" id="UP000001994">
    <property type="component" value="Chromosome"/>
</dbReference>
<dbReference type="GO" id="GO:1990904">
    <property type="term" value="C:ribonucleoprotein complex"/>
    <property type="evidence" value="ECO:0007669"/>
    <property type="project" value="UniProtKB-KW"/>
</dbReference>
<dbReference type="GO" id="GO:0005840">
    <property type="term" value="C:ribosome"/>
    <property type="evidence" value="ECO:0007669"/>
    <property type="project" value="UniProtKB-KW"/>
</dbReference>
<dbReference type="GO" id="GO:0019843">
    <property type="term" value="F:rRNA binding"/>
    <property type="evidence" value="ECO:0007669"/>
    <property type="project" value="UniProtKB-UniRule"/>
</dbReference>
<dbReference type="GO" id="GO:0003735">
    <property type="term" value="F:structural constituent of ribosome"/>
    <property type="evidence" value="ECO:0007669"/>
    <property type="project" value="InterPro"/>
</dbReference>
<dbReference type="GO" id="GO:0006412">
    <property type="term" value="P:translation"/>
    <property type="evidence" value="ECO:0007669"/>
    <property type="project" value="UniProtKB-UniRule"/>
</dbReference>
<dbReference type="FunFam" id="3.30.1370.30:FF:000002">
    <property type="entry name" value="30S ribosomal protein S8"/>
    <property type="match status" value="1"/>
</dbReference>
<dbReference type="FunFam" id="3.30.1490.10:FF:000001">
    <property type="entry name" value="30S ribosomal protein S8"/>
    <property type="match status" value="1"/>
</dbReference>
<dbReference type="Gene3D" id="3.30.1370.30">
    <property type="match status" value="1"/>
</dbReference>
<dbReference type="Gene3D" id="3.30.1490.10">
    <property type="match status" value="1"/>
</dbReference>
<dbReference type="HAMAP" id="MF_01302_B">
    <property type="entry name" value="Ribosomal_uS8_B"/>
    <property type="match status" value="1"/>
</dbReference>
<dbReference type="InterPro" id="IPR000630">
    <property type="entry name" value="Ribosomal_uS8"/>
</dbReference>
<dbReference type="InterPro" id="IPR047863">
    <property type="entry name" value="Ribosomal_uS8_CS"/>
</dbReference>
<dbReference type="InterPro" id="IPR035987">
    <property type="entry name" value="Ribosomal_uS8_sf"/>
</dbReference>
<dbReference type="NCBIfam" id="NF001109">
    <property type="entry name" value="PRK00136.1"/>
    <property type="match status" value="1"/>
</dbReference>
<dbReference type="PANTHER" id="PTHR11758">
    <property type="entry name" value="40S RIBOSOMAL PROTEIN S15A"/>
    <property type="match status" value="1"/>
</dbReference>
<dbReference type="Pfam" id="PF00410">
    <property type="entry name" value="Ribosomal_S8"/>
    <property type="match status" value="1"/>
</dbReference>
<dbReference type="SUPFAM" id="SSF56047">
    <property type="entry name" value="Ribosomal protein S8"/>
    <property type="match status" value="1"/>
</dbReference>
<dbReference type="PROSITE" id="PS00053">
    <property type="entry name" value="RIBOSOMAL_S8"/>
    <property type="match status" value="1"/>
</dbReference>
<sequence length="132" mass="14633">MSTHDPISDLITRIRNAQMRSKSKVTTPGSKMRASVLEVLKSEGYIRGYATMEHPSGRSEIEIELKYFDGEPVIREIERVSKPGRRVYTSVKNLPRVNNGLGISVLSTPKGIMADHSARDANVGGEVLFTVF</sequence>
<keyword id="KW-1185">Reference proteome</keyword>
<keyword id="KW-0687">Ribonucleoprotein</keyword>
<keyword id="KW-0689">Ribosomal protein</keyword>
<keyword id="KW-0694">RNA-binding</keyword>
<keyword id="KW-0699">rRNA-binding</keyword>
<name>RS8_BRASO</name>
<organism>
    <name type="scientific">Bradyrhizobium sp. (strain ORS 278)</name>
    <dbReference type="NCBI Taxonomy" id="114615"/>
    <lineage>
        <taxon>Bacteria</taxon>
        <taxon>Pseudomonadati</taxon>
        <taxon>Pseudomonadota</taxon>
        <taxon>Alphaproteobacteria</taxon>
        <taxon>Hyphomicrobiales</taxon>
        <taxon>Nitrobacteraceae</taxon>
        <taxon>Bradyrhizobium</taxon>
    </lineage>
</organism>
<comment type="function">
    <text evidence="1">One of the primary rRNA binding proteins, it binds directly to 16S rRNA central domain where it helps coordinate assembly of the platform of the 30S subunit.</text>
</comment>
<comment type="subunit">
    <text evidence="1">Part of the 30S ribosomal subunit. Contacts proteins S5 and S12.</text>
</comment>
<comment type="similarity">
    <text evidence="1">Belongs to the universal ribosomal protein uS8 family.</text>
</comment>
<evidence type="ECO:0000255" key="1">
    <source>
        <dbReference type="HAMAP-Rule" id="MF_01302"/>
    </source>
</evidence>
<evidence type="ECO:0000305" key="2"/>
<accession>A4YSK6</accession>
<proteinExistence type="inferred from homology"/>
<protein>
    <recommendedName>
        <fullName evidence="1">Small ribosomal subunit protein uS8</fullName>
    </recommendedName>
    <alternativeName>
        <fullName evidence="2">30S ribosomal protein S8</fullName>
    </alternativeName>
</protein>
<reference key="1">
    <citation type="journal article" date="2007" name="Science">
        <title>Legumes symbioses: absence of nod genes in photosynthetic bradyrhizobia.</title>
        <authorList>
            <person name="Giraud E."/>
            <person name="Moulin L."/>
            <person name="Vallenet D."/>
            <person name="Barbe V."/>
            <person name="Cytryn E."/>
            <person name="Avarre J.-C."/>
            <person name="Jaubert M."/>
            <person name="Simon D."/>
            <person name="Cartieaux F."/>
            <person name="Prin Y."/>
            <person name="Bena G."/>
            <person name="Hannibal L."/>
            <person name="Fardoux J."/>
            <person name="Kojadinovic M."/>
            <person name="Vuillet L."/>
            <person name="Lajus A."/>
            <person name="Cruveiller S."/>
            <person name="Rouy Z."/>
            <person name="Mangenot S."/>
            <person name="Segurens B."/>
            <person name="Dossat C."/>
            <person name="Franck W.L."/>
            <person name="Chang W.-S."/>
            <person name="Saunders E."/>
            <person name="Bruce D."/>
            <person name="Richardson P."/>
            <person name="Normand P."/>
            <person name="Dreyfus B."/>
            <person name="Pignol D."/>
            <person name="Stacey G."/>
            <person name="Emerich D."/>
            <person name="Vermeglio A."/>
            <person name="Medigue C."/>
            <person name="Sadowsky M."/>
        </authorList>
    </citation>
    <scope>NUCLEOTIDE SEQUENCE [LARGE SCALE GENOMIC DNA]</scope>
    <source>
        <strain>ORS 278</strain>
    </source>
</reference>
<feature type="chain" id="PRO_0000305737" description="Small ribosomal subunit protein uS8">
    <location>
        <begin position="1"/>
        <end position="132"/>
    </location>
</feature>
<gene>
    <name evidence="1" type="primary">rpsH</name>
    <name type="ordered locus">BRADO3080</name>
</gene>